<evidence type="ECO:0000255" key="1">
    <source>
        <dbReference type="PROSITE-ProRule" id="PRU01240"/>
    </source>
</evidence>
<feature type="chain" id="PRO_0000200809" description="Uncharacterized protein y4bN">
    <location>
        <begin position="1"/>
        <end position="431"/>
    </location>
</feature>
<feature type="domain" description="Peptidase S8" evidence="1">
    <location>
        <begin position="1"/>
        <end position="258"/>
    </location>
</feature>
<geneLocation type="plasmid">
    <name>sym pNGR234a</name>
</geneLocation>
<reference key="1">
    <citation type="journal article" date="1997" name="Nature">
        <title>Molecular basis of symbiosis between Rhizobium and legumes.</title>
        <authorList>
            <person name="Freiberg C.A."/>
            <person name="Fellay R."/>
            <person name="Bairoch A."/>
            <person name="Broughton W.J."/>
            <person name="Rosenthal A."/>
            <person name="Perret X."/>
        </authorList>
    </citation>
    <scope>NUCLEOTIDE SEQUENCE [LARGE SCALE GENOMIC DNA]</scope>
    <source>
        <strain>NBRC 101917 / NGR234</strain>
    </source>
</reference>
<reference key="2">
    <citation type="journal article" date="2009" name="Appl. Environ. Microbiol.">
        <title>Rhizobium sp. strain NGR234 possesses a remarkable number of secretion systems.</title>
        <authorList>
            <person name="Schmeisser C."/>
            <person name="Liesegang H."/>
            <person name="Krysciak D."/>
            <person name="Bakkou N."/>
            <person name="Le Quere A."/>
            <person name="Wollherr A."/>
            <person name="Heinemeyer I."/>
            <person name="Morgenstern B."/>
            <person name="Pommerening-Roeser A."/>
            <person name="Flores M."/>
            <person name="Palacios R."/>
            <person name="Brenner S."/>
            <person name="Gottschalk G."/>
            <person name="Schmitz R.A."/>
            <person name="Broughton W.J."/>
            <person name="Perret X."/>
            <person name="Strittmatter A.W."/>
            <person name="Streit W.R."/>
        </authorList>
    </citation>
    <scope>NUCLEOTIDE SEQUENCE [LARGE SCALE GENOMIC DNA]</scope>
    <source>
        <strain>NBRC 101917 / NGR234</strain>
    </source>
</reference>
<name>Y4BN_SINFN</name>
<organism>
    <name type="scientific">Sinorhizobium fredii (strain NBRC 101917 / NGR234)</name>
    <dbReference type="NCBI Taxonomy" id="394"/>
    <lineage>
        <taxon>Bacteria</taxon>
        <taxon>Pseudomonadati</taxon>
        <taxon>Pseudomonadota</taxon>
        <taxon>Alphaproteobacteria</taxon>
        <taxon>Hyphomicrobiales</taxon>
        <taxon>Rhizobiaceae</taxon>
        <taxon>Sinorhizobium/Ensifer group</taxon>
        <taxon>Sinorhizobium</taxon>
    </lineage>
</organism>
<keyword id="KW-0614">Plasmid</keyword>
<keyword id="KW-1185">Reference proteome</keyword>
<sequence>MPSQMREAITRLNEEFGCRIFVISLGDKKRVFDGGKVGTWAATLDELARERNVVIIVSAGNRGPRAGSRVEQGVTEYPDYLLEANNRLLEPAGAMNVITVGSIAQGDGLDADMAGDVRVRPITRANEPSPFSRVGPGLGGGTKPDLVDVGGTLIFDPVVARLRGGEDRPSAGVLTLNHNYLNRLFTAGSGTSYSAPRVGFSAGQILARFPGASANLVRALLINSAEVPQQASERLQILGSEAVRSVCGHGLIDLERAGFSDDARVTLYTEDELPLDHFAVYRIPIPEVFQEGNTERTIRVTLAYDPPVRHTRNDYAGVGMSFRLVRGCEPNFIFEHYRKRAEVEGPFPEMENRFNCKLEPGPKVREKSSVQRASITFKRGIEQYGDSYYLVVRCESGWATHVDRQPFAVVVELLQKAEVRLYERLRQRVRA</sequence>
<protein>
    <recommendedName>
        <fullName>Uncharacterized protein y4bN</fullName>
    </recommendedName>
</protein>
<gene>
    <name type="ordered locus">NGR_a00160</name>
    <name type="ORF">y4bN</name>
</gene>
<accession>P55381</accession>
<dbReference type="EMBL" id="U00090">
    <property type="protein sequence ID" value="AAB91629.1"/>
    <property type="molecule type" value="Genomic_DNA"/>
</dbReference>
<dbReference type="RefSeq" id="NP_443791.1">
    <property type="nucleotide sequence ID" value="NC_000914.2"/>
</dbReference>
<dbReference type="KEGG" id="rhi:NGR_a00160"/>
<dbReference type="PATRIC" id="fig|394.7.peg.13"/>
<dbReference type="eggNOG" id="COG1404">
    <property type="taxonomic scope" value="Bacteria"/>
</dbReference>
<dbReference type="HOGENOM" id="CLU_020472_0_0_5"/>
<dbReference type="OrthoDB" id="9768989at2"/>
<dbReference type="Proteomes" id="UP000001054">
    <property type="component" value="Plasmid pNGR234a"/>
</dbReference>
<dbReference type="GO" id="GO:0004252">
    <property type="term" value="F:serine-type endopeptidase activity"/>
    <property type="evidence" value="ECO:0007669"/>
    <property type="project" value="InterPro"/>
</dbReference>
<dbReference type="GO" id="GO:0006508">
    <property type="term" value="P:proteolysis"/>
    <property type="evidence" value="ECO:0007669"/>
    <property type="project" value="InterPro"/>
</dbReference>
<dbReference type="CDD" id="cd04847">
    <property type="entry name" value="Peptidases_S8_Subtilisin_like_2"/>
    <property type="match status" value="1"/>
</dbReference>
<dbReference type="Gene3D" id="3.40.50.200">
    <property type="entry name" value="Peptidase S8/S53 domain"/>
    <property type="match status" value="1"/>
</dbReference>
<dbReference type="InterPro" id="IPR000209">
    <property type="entry name" value="Peptidase_S8/S53_dom"/>
</dbReference>
<dbReference type="InterPro" id="IPR036852">
    <property type="entry name" value="Peptidase_S8/S53_dom_sf"/>
</dbReference>
<dbReference type="InterPro" id="IPR034074">
    <property type="entry name" value="Y4bN_pept_dom"/>
</dbReference>
<dbReference type="Pfam" id="PF00082">
    <property type="entry name" value="Peptidase_S8"/>
    <property type="match status" value="1"/>
</dbReference>
<dbReference type="SUPFAM" id="SSF52743">
    <property type="entry name" value="Subtilisin-like"/>
    <property type="match status" value="1"/>
</dbReference>
<dbReference type="PROSITE" id="PS51892">
    <property type="entry name" value="SUBTILASE"/>
    <property type="match status" value="1"/>
</dbReference>
<comment type="similarity">
    <text evidence="1">Belongs to the peptidase S8 family.</text>
</comment>
<proteinExistence type="inferred from homology"/>